<sequence>MELYLDTANVAEVERLARIFPIAGVTTNPSIVAASKESIWDVLPRLQNAIGEEGTLFAQTMSRDAKGMVEEAKRLNNAIPGIVVKIPVTAEGLAAIKLLKKEGIVTLGTAVYSASQGLLAALAGAKYVAPYVNRVDAQGGDGIRMVQELQTLLEHHAPDSMVLAASFKTPRQALDCLLAGCQAITLPLDVAQQMLNTPAVESAIEKFEQDWKNAFGNLNL</sequence>
<accession>B5FPW2</accession>
<gene>
    <name evidence="1" type="primary">fsa</name>
    <name type="ordered locus">SeD_A4515</name>
</gene>
<reference key="1">
    <citation type="journal article" date="2011" name="J. Bacteriol.">
        <title>Comparative genomics of 28 Salmonella enterica isolates: evidence for CRISPR-mediated adaptive sublineage evolution.</title>
        <authorList>
            <person name="Fricke W.F."/>
            <person name="Mammel M.K."/>
            <person name="McDermott P.F."/>
            <person name="Tartera C."/>
            <person name="White D.G."/>
            <person name="Leclerc J.E."/>
            <person name="Ravel J."/>
            <person name="Cebula T.A."/>
        </authorList>
    </citation>
    <scope>NUCLEOTIDE SEQUENCE [LARGE SCALE GENOMIC DNA]</scope>
    <source>
        <strain>CT_02021853</strain>
    </source>
</reference>
<name>FSA_SALDC</name>
<keyword id="KW-0119">Carbohydrate metabolism</keyword>
<keyword id="KW-0963">Cytoplasm</keyword>
<keyword id="KW-0456">Lyase</keyword>
<keyword id="KW-0704">Schiff base</keyword>
<dbReference type="EC" id="4.1.2.-" evidence="1"/>
<dbReference type="EMBL" id="CP001144">
    <property type="protein sequence ID" value="ACH75638.1"/>
    <property type="molecule type" value="Genomic_DNA"/>
</dbReference>
<dbReference type="RefSeq" id="WP_000424866.1">
    <property type="nucleotide sequence ID" value="NC_011205.1"/>
</dbReference>
<dbReference type="SMR" id="B5FPW2"/>
<dbReference type="KEGG" id="sed:SeD_A4515"/>
<dbReference type="HOGENOM" id="CLU_079764_2_0_6"/>
<dbReference type="Proteomes" id="UP000008322">
    <property type="component" value="Chromosome"/>
</dbReference>
<dbReference type="GO" id="GO:0005737">
    <property type="term" value="C:cytoplasm"/>
    <property type="evidence" value="ECO:0007669"/>
    <property type="project" value="UniProtKB-SubCell"/>
</dbReference>
<dbReference type="GO" id="GO:0097023">
    <property type="term" value="F:fructose 6-phosphate aldolase activity"/>
    <property type="evidence" value="ECO:0007669"/>
    <property type="project" value="RHEA"/>
</dbReference>
<dbReference type="GO" id="GO:0006000">
    <property type="term" value="P:fructose metabolic process"/>
    <property type="evidence" value="ECO:0007669"/>
    <property type="project" value="UniProtKB-UniRule"/>
</dbReference>
<dbReference type="CDD" id="cd00956">
    <property type="entry name" value="Transaldolase_FSA"/>
    <property type="match status" value="1"/>
</dbReference>
<dbReference type="FunFam" id="3.20.20.70:FF:000018">
    <property type="entry name" value="Probable transaldolase"/>
    <property type="match status" value="1"/>
</dbReference>
<dbReference type="Gene3D" id="3.20.20.70">
    <property type="entry name" value="Aldolase class I"/>
    <property type="match status" value="1"/>
</dbReference>
<dbReference type="HAMAP" id="MF_00496">
    <property type="entry name" value="F6P_aldolase"/>
    <property type="match status" value="1"/>
</dbReference>
<dbReference type="InterPro" id="IPR013785">
    <property type="entry name" value="Aldolase_TIM"/>
</dbReference>
<dbReference type="InterPro" id="IPR023001">
    <property type="entry name" value="F6P_aldolase"/>
</dbReference>
<dbReference type="InterPro" id="IPR001585">
    <property type="entry name" value="TAL/FSA"/>
</dbReference>
<dbReference type="InterPro" id="IPR004731">
    <property type="entry name" value="Transaldolase_3B/F6P_aldolase"/>
</dbReference>
<dbReference type="InterPro" id="IPR018225">
    <property type="entry name" value="Transaldolase_AS"/>
</dbReference>
<dbReference type="InterPro" id="IPR033919">
    <property type="entry name" value="TSA/FSA_arc/bac"/>
</dbReference>
<dbReference type="NCBIfam" id="TIGR00875">
    <property type="entry name" value="fsa_talC_mipB"/>
    <property type="match status" value="1"/>
</dbReference>
<dbReference type="NCBIfam" id="NF009296">
    <property type="entry name" value="PRK12653.1"/>
    <property type="match status" value="1"/>
</dbReference>
<dbReference type="PANTHER" id="PTHR10683:SF40">
    <property type="entry name" value="FRUCTOSE-6-PHOSPHATE ALDOLASE 1-RELATED"/>
    <property type="match status" value="1"/>
</dbReference>
<dbReference type="PANTHER" id="PTHR10683">
    <property type="entry name" value="TRANSALDOLASE"/>
    <property type="match status" value="1"/>
</dbReference>
<dbReference type="Pfam" id="PF00923">
    <property type="entry name" value="TAL_FSA"/>
    <property type="match status" value="1"/>
</dbReference>
<dbReference type="SUPFAM" id="SSF51569">
    <property type="entry name" value="Aldolase"/>
    <property type="match status" value="1"/>
</dbReference>
<dbReference type="PROSITE" id="PS01054">
    <property type="entry name" value="TRANSALDOLASE_1"/>
    <property type="match status" value="1"/>
</dbReference>
<dbReference type="PROSITE" id="PS00958">
    <property type="entry name" value="TRANSALDOLASE_2"/>
    <property type="match status" value="1"/>
</dbReference>
<comment type="function">
    <text evidence="1">Catalyzes the reversible formation of fructose 6-phosphate from dihydroxyacetone and D-glyceraldehyde 3-phosphate via an aldolization reaction.</text>
</comment>
<comment type="catalytic activity">
    <reaction evidence="1">
        <text>beta-D-fructose 6-phosphate = dihydroxyacetone + D-glyceraldehyde 3-phosphate</text>
        <dbReference type="Rhea" id="RHEA:28002"/>
        <dbReference type="ChEBI" id="CHEBI:16016"/>
        <dbReference type="ChEBI" id="CHEBI:57634"/>
        <dbReference type="ChEBI" id="CHEBI:59776"/>
    </reaction>
</comment>
<comment type="subunit">
    <text evidence="1">Homodecamer.</text>
</comment>
<comment type="subcellular location">
    <subcellularLocation>
        <location evidence="1">Cytoplasm</location>
    </subcellularLocation>
</comment>
<comment type="similarity">
    <text evidence="1">Belongs to the transaldolase family. Type 3A subfamily.</text>
</comment>
<organism>
    <name type="scientific">Salmonella dublin (strain CT_02021853)</name>
    <dbReference type="NCBI Taxonomy" id="439851"/>
    <lineage>
        <taxon>Bacteria</taxon>
        <taxon>Pseudomonadati</taxon>
        <taxon>Pseudomonadota</taxon>
        <taxon>Gammaproteobacteria</taxon>
        <taxon>Enterobacterales</taxon>
        <taxon>Enterobacteriaceae</taxon>
        <taxon>Salmonella</taxon>
    </lineage>
</organism>
<proteinExistence type="inferred from homology"/>
<protein>
    <recommendedName>
        <fullName evidence="1">Fructose-6-phosphate aldolase</fullName>
        <ecNumber evidence="1">4.1.2.-</ecNumber>
    </recommendedName>
</protein>
<evidence type="ECO:0000255" key="1">
    <source>
        <dbReference type="HAMAP-Rule" id="MF_00496"/>
    </source>
</evidence>
<feature type="chain" id="PRO_1000126374" description="Fructose-6-phosphate aldolase">
    <location>
        <begin position="1"/>
        <end position="220"/>
    </location>
</feature>
<feature type="active site" description="Schiff-base intermediate with substrate" evidence="1">
    <location>
        <position position="85"/>
    </location>
</feature>